<protein>
    <recommendedName>
        <fullName>Thiol protease aleurain</fullName>
        <ecNumber evidence="9">3.4.22.16</ecNumber>
    </recommendedName>
</protein>
<evidence type="ECO:0000250" key="1">
    <source>
        <dbReference type="UniProtKB" id="P00785"/>
    </source>
</evidence>
<evidence type="ECO:0000250" key="2">
    <source>
        <dbReference type="UniProtKB" id="P07858"/>
    </source>
</evidence>
<evidence type="ECO:0000250" key="3">
    <source>
        <dbReference type="UniProtKB" id="P25250"/>
    </source>
</evidence>
<evidence type="ECO:0000255" key="4"/>
<evidence type="ECO:0000255" key="5">
    <source>
        <dbReference type="PROSITE-ProRule" id="PRU00498"/>
    </source>
</evidence>
<evidence type="ECO:0000255" key="6">
    <source>
        <dbReference type="PROSITE-ProRule" id="PRU10088"/>
    </source>
</evidence>
<evidence type="ECO:0000255" key="7">
    <source>
        <dbReference type="PROSITE-ProRule" id="PRU10089"/>
    </source>
</evidence>
<evidence type="ECO:0000255" key="8">
    <source>
        <dbReference type="PROSITE-ProRule" id="PRU10090"/>
    </source>
</evidence>
<evidence type="ECO:0000305" key="9"/>
<name>ALEU_HORVU</name>
<organism>
    <name type="scientific">Hordeum vulgare</name>
    <name type="common">Barley</name>
    <dbReference type="NCBI Taxonomy" id="4513"/>
    <lineage>
        <taxon>Eukaryota</taxon>
        <taxon>Viridiplantae</taxon>
        <taxon>Streptophyta</taxon>
        <taxon>Embryophyta</taxon>
        <taxon>Tracheophyta</taxon>
        <taxon>Spermatophyta</taxon>
        <taxon>Magnoliopsida</taxon>
        <taxon>Liliopsida</taxon>
        <taxon>Poales</taxon>
        <taxon>Poaceae</taxon>
        <taxon>BOP clade</taxon>
        <taxon>Pooideae</taxon>
        <taxon>Triticodae</taxon>
        <taxon>Triticeae</taxon>
        <taxon>Hordeinae</taxon>
        <taxon>Hordeum</taxon>
    </lineage>
</organism>
<proteinExistence type="evidence at transcript level"/>
<sequence>MAHARVLLLALAVLATAAVAVASSSSFADSNPIRPVTDRAASTLESAVLGALGRTRHALRFARFAVRYGKSYESAAEVRRRFRIFSESLEEVRSTNRKGLPYRLGINRFSDMSWEEFQATRLGAAQTCSATLAGNHLMRDAAALPETKDWREDGIVSPVKNQAHCGSCWTFSTTGALEAAYTQATGKNISLSEQQLVDCAGGFNNFGCNGGLPSQAFEYIKYNGGIDTEESYPYKGVNGVCHYKAENAAVQVLDSVNITLNAEDELKNAVGLVRPVSVAFQVIDGFRQYKSGVYTSDHCGTTPDDVNHAVLAVGYGVENGVPYWLIKNSWGADWGDNGYFKMEMGKNMCAIATCASYPVVAA</sequence>
<dbReference type="EC" id="3.4.22.16" evidence="9"/>
<dbReference type="EMBL" id="X05167">
    <property type="protein sequence ID" value="CAA28804.1"/>
    <property type="molecule type" value="Genomic_DNA"/>
</dbReference>
<dbReference type="PIR" id="A25492">
    <property type="entry name" value="KHBH"/>
</dbReference>
<dbReference type="SMR" id="P05167"/>
<dbReference type="MEROPS" id="C01.041"/>
<dbReference type="MEROPS" id="I29.003"/>
<dbReference type="OMA" id="TCKFQPQ"/>
<dbReference type="ExpressionAtlas" id="P05167">
    <property type="expression patterns" value="baseline and differential"/>
</dbReference>
<dbReference type="GO" id="GO:0005773">
    <property type="term" value="C:vacuole"/>
    <property type="evidence" value="ECO:0007669"/>
    <property type="project" value="UniProtKB-SubCell"/>
</dbReference>
<dbReference type="GO" id="GO:0004197">
    <property type="term" value="F:cysteine-type endopeptidase activity"/>
    <property type="evidence" value="ECO:0007669"/>
    <property type="project" value="UniProtKB-EC"/>
</dbReference>
<dbReference type="GO" id="GO:0006508">
    <property type="term" value="P:proteolysis"/>
    <property type="evidence" value="ECO:0007669"/>
    <property type="project" value="UniProtKB-KW"/>
</dbReference>
<dbReference type="CDD" id="cd02248">
    <property type="entry name" value="Peptidase_C1A"/>
    <property type="match status" value="1"/>
</dbReference>
<dbReference type="FunFam" id="3.90.70.10:FF:000039">
    <property type="entry name" value="Cysteine proteinase 2, putative"/>
    <property type="match status" value="1"/>
</dbReference>
<dbReference type="Gene3D" id="3.90.70.10">
    <property type="entry name" value="Cysteine proteinases"/>
    <property type="match status" value="1"/>
</dbReference>
<dbReference type="InterPro" id="IPR038765">
    <property type="entry name" value="Papain-like_cys_pep_sf"/>
</dbReference>
<dbReference type="InterPro" id="IPR025661">
    <property type="entry name" value="Pept_asp_AS"/>
</dbReference>
<dbReference type="InterPro" id="IPR000169">
    <property type="entry name" value="Pept_cys_AS"/>
</dbReference>
<dbReference type="InterPro" id="IPR025660">
    <property type="entry name" value="Pept_his_AS"/>
</dbReference>
<dbReference type="InterPro" id="IPR013128">
    <property type="entry name" value="Peptidase_C1A"/>
</dbReference>
<dbReference type="InterPro" id="IPR000668">
    <property type="entry name" value="Peptidase_C1A_C"/>
</dbReference>
<dbReference type="InterPro" id="IPR039417">
    <property type="entry name" value="Peptidase_C1A_papain-like"/>
</dbReference>
<dbReference type="InterPro" id="IPR013201">
    <property type="entry name" value="Prot_inhib_I29"/>
</dbReference>
<dbReference type="PANTHER" id="PTHR12411">
    <property type="entry name" value="CYSTEINE PROTEASE FAMILY C1-RELATED"/>
    <property type="match status" value="1"/>
</dbReference>
<dbReference type="Pfam" id="PF08246">
    <property type="entry name" value="Inhibitor_I29"/>
    <property type="match status" value="1"/>
</dbReference>
<dbReference type="Pfam" id="PF00112">
    <property type="entry name" value="Peptidase_C1"/>
    <property type="match status" value="1"/>
</dbReference>
<dbReference type="PRINTS" id="PR00705">
    <property type="entry name" value="PAPAIN"/>
</dbReference>
<dbReference type="SMART" id="SM00848">
    <property type="entry name" value="Inhibitor_I29"/>
    <property type="match status" value="1"/>
</dbReference>
<dbReference type="SMART" id="SM00645">
    <property type="entry name" value="Pept_C1"/>
    <property type="match status" value="1"/>
</dbReference>
<dbReference type="SUPFAM" id="SSF54001">
    <property type="entry name" value="Cysteine proteinases"/>
    <property type="match status" value="1"/>
</dbReference>
<dbReference type="PROSITE" id="PS00640">
    <property type="entry name" value="THIOL_PROTEASE_ASN"/>
    <property type="match status" value="1"/>
</dbReference>
<dbReference type="PROSITE" id="PS00139">
    <property type="entry name" value="THIOL_PROTEASE_CYS"/>
    <property type="match status" value="1"/>
</dbReference>
<dbReference type="PROSITE" id="PS00639">
    <property type="entry name" value="THIOL_PROTEASE_HIS"/>
    <property type="match status" value="1"/>
</dbReference>
<comment type="function">
    <text evidence="9">May play a role in proteolysis leading to mobilization of nitrogen during senescence and starvation.</text>
</comment>
<comment type="catalytic activity">
    <reaction evidence="9">
        <text>Hydrolysis of proteins, acting as an aminopeptidase (notably, cleaving Arg-|-Xaa bonds) as well as an endopeptidase.</text>
        <dbReference type="EC" id="3.4.22.16"/>
    </reaction>
</comment>
<comment type="subcellular location">
    <subcellularLocation>
        <location>Vacuole</location>
    </subcellularLocation>
    <text>Vacuole-like subcellular compartment.</text>
</comment>
<comment type="induction">
    <text>Aleurain is synthesized by the aleurone cells stimulated by gibberellic or abscisic acid.</text>
</comment>
<comment type="similarity">
    <text evidence="6 7 8">Belongs to the peptidase C1 family.</text>
</comment>
<accession>P05167</accession>
<reference key="1">
    <citation type="journal article" date="1985" name="Proc. Natl. Acad. Sci. U.S.A.">
        <title>Aleurain: a barley thiol protease closely related to mammalian cathepsin H.</title>
        <authorList>
            <person name="Rogers J.C."/>
            <person name="Dean D."/>
            <person name="Heck G.R."/>
        </authorList>
    </citation>
    <scope>NUCLEOTIDE SEQUENCE [GENOMIC DNA]</scope>
</reference>
<reference key="2">
    <citation type="submission" date="1987-03" db="EMBL/GenBank/DDBJ databases">
        <authorList>
            <person name="Rogers J.C."/>
        </authorList>
    </citation>
    <scope>SEQUENCE REVISION</scope>
</reference>
<keyword id="KW-1015">Disulfide bond</keyword>
<keyword id="KW-0309">Germination</keyword>
<keyword id="KW-0325">Glycoprotein</keyword>
<keyword id="KW-0378">Hydrolase</keyword>
<keyword id="KW-0645">Protease</keyword>
<keyword id="KW-0732">Signal</keyword>
<keyword id="KW-0788">Thiol protease</keyword>
<keyword id="KW-0926">Vacuole</keyword>
<keyword id="KW-0865">Zymogen</keyword>
<feature type="signal peptide" evidence="4">
    <location>
        <begin position="1"/>
        <end position="22"/>
    </location>
</feature>
<feature type="propeptide" id="PRO_0000026416" description="Activation peptide" evidence="1">
    <location>
        <begin position="23"/>
        <end position="143"/>
    </location>
</feature>
<feature type="chain" id="PRO_0000026417" description="Thiol protease aleurain">
    <location>
        <begin position="144"/>
        <end position="362"/>
    </location>
</feature>
<feature type="active site" evidence="6">
    <location>
        <position position="168"/>
    </location>
</feature>
<feature type="active site" evidence="7">
    <location>
        <position position="308"/>
    </location>
</feature>
<feature type="active site" evidence="8">
    <location>
        <position position="328"/>
    </location>
</feature>
<feature type="glycosylation site" description="N-linked (GlcNAc...) asparagine" evidence="5">
    <location>
        <position position="188"/>
    </location>
</feature>
<feature type="glycosylation site" description="N-linked (GlcNAc...) asparagine" evidence="5">
    <location>
        <position position="257"/>
    </location>
</feature>
<feature type="disulfide bond" evidence="2">
    <location>
        <begin position="165"/>
        <end position="208"/>
    </location>
</feature>
<feature type="disulfide bond" evidence="3">
    <location>
        <begin position="199"/>
        <end position="241"/>
    </location>
</feature>
<feature type="disulfide bond" evidence="3">
    <location>
        <begin position="299"/>
        <end position="349"/>
    </location>
</feature>